<name>COX8A_EULFU</name>
<feature type="transit peptide" description="Mitochondrion" evidence="2">
    <location>
        <begin position="1"/>
        <end position="25"/>
    </location>
</feature>
<feature type="chain" id="PRO_0000006183" description="Cytochrome c oxidase subunit 8A, mitochondrial">
    <location>
        <begin position="26"/>
        <end position="69"/>
    </location>
</feature>
<feature type="topological domain" description="Mitochondrial matrix" evidence="2">
    <location>
        <begin position="26"/>
        <end position="36"/>
    </location>
</feature>
<feature type="transmembrane region" description="Helical" evidence="1">
    <location>
        <begin position="37"/>
        <end position="60"/>
    </location>
</feature>
<feature type="topological domain" description="Mitochondrial intermembrane" evidence="2">
    <location>
        <begin position="61"/>
        <end position="69"/>
    </location>
</feature>
<feature type="short sequence motif" description="SIFI-degron" evidence="2">
    <location>
        <begin position="2"/>
        <end position="19"/>
    </location>
</feature>
<proteinExistence type="inferred from homology"/>
<comment type="function">
    <text evidence="1">Component of the cytochrome c oxidase, the last enzyme in the mitochondrial electron transport chain which drives oxidative phosphorylation. The respiratory chain contains 3 multisubunit complexes succinate dehydrogenase (complex II, CII), ubiquinol-cytochrome c oxidoreductase (cytochrome b-c1 complex, complex III, CIII) and cytochrome c oxidase (complex IV, CIV), that cooperate to transfer electrons derived from NADH and succinate to molecular oxygen, creating an electrochemical gradient over the inner membrane that drives transmembrane transport and the ATP synthase. Cytochrome c oxidase is the component of the respiratory chain that catalyzes the reduction of oxygen to water. Electrons originating from reduced cytochrome c in the intermembrane space (IMS) are transferred via the dinuclear copper A center (CU(A)) of subunit 2 and heme A of subunit 1 to the active site in subunit 1, a binuclear center (BNC) formed by heme A3 and copper B (CU(B)). The BNC reduces molecular oxygen to 2 water molecules using 4 electrons from cytochrome c in the IMS and 4 protons from the mitochondrial matrix.</text>
</comment>
<comment type="pathway">
    <text evidence="1">Energy metabolism; oxidative phosphorylation.</text>
</comment>
<comment type="subunit">
    <text evidence="2">Component of the cytochrome c oxidase (complex IV, CIV), a multisubunit enzyme composed of 14 subunits. The complex is composed of a catalytic core of 3 subunits MT-CO1, MT-CO2 and MT-CO3, encoded in the mitochondrial DNA, and 11 supernumerary subunits COX4I, COX5A, COX5B, COX6A, COX6B, COX6C, COX7A, COX7B, COX7C, COX8 and NDUFA4, which are encoded in the nuclear genome. The complex exists as a monomer or a dimer and forms supercomplexes (SCs) in the inner mitochondrial membrane with NADH-ubiquinone oxidoreductase (complex I, CI) and ubiquinol-cytochrome c oxidoreductase (cytochrome b-c1 complex, complex III, CIII), resulting in different assemblies (supercomplex SCI(1)III(2)IV(1) and megacomplex MCI(2)III(2)IV(2)).</text>
</comment>
<comment type="subcellular location">
    <subcellularLocation>
        <location evidence="2">Mitochondrion inner membrane</location>
        <topology evidence="2">Single-pass membrane protein</topology>
    </subcellularLocation>
</comment>
<comment type="PTM">
    <text evidence="2">In response to mitochondrial stress, the precursor protein is ubiquitinated by the SIFI complex in the cytoplasm before mitochondrial import, leading to its degradation. Within the SIFI complex, UBR4 initiates ubiquitin chain that are further elongated or branched by KCMF1.</text>
</comment>
<comment type="similarity">
    <text evidence="3">Belongs to the cytochrome c oxidase VIII family.</text>
</comment>
<organism>
    <name type="scientific">Eulemur fulvus fulvus</name>
    <name type="common">Brown lemur</name>
    <dbReference type="NCBI Taxonomy" id="40322"/>
    <lineage>
        <taxon>Eukaryota</taxon>
        <taxon>Metazoa</taxon>
        <taxon>Chordata</taxon>
        <taxon>Craniata</taxon>
        <taxon>Vertebrata</taxon>
        <taxon>Euteleostomi</taxon>
        <taxon>Mammalia</taxon>
        <taxon>Eutheria</taxon>
        <taxon>Euarchontoglires</taxon>
        <taxon>Primates</taxon>
        <taxon>Strepsirrhini</taxon>
        <taxon>Lemuriformes</taxon>
        <taxon>Lemuridae</taxon>
        <taxon>Eulemur</taxon>
    </lineage>
</organism>
<evidence type="ECO:0000250" key="1">
    <source>
        <dbReference type="UniProtKB" id="P10175"/>
    </source>
</evidence>
<evidence type="ECO:0000250" key="2">
    <source>
        <dbReference type="UniProtKB" id="P10176"/>
    </source>
</evidence>
<evidence type="ECO:0000305" key="3"/>
<reference key="1">
    <citation type="journal article" date="2003" name="Proc. Natl. Acad. Sci. U.S.A.">
        <title>Adaptive evolution of cytochrome c oxidase subunit VIII in anthropoid primates.</title>
        <authorList>
            <person name="Goldberg A."/>
            <person name="Wildman D.E."/>
            <person name="Schmidt T.R."/>
            <person name="Huttemann M."/>
            <person name="Goodman M."/>
            <person name="Weiss M.L."/>
            <person name="Grossman L.I."/>
        </authorList>
    </citation>
    <scope>NUCLEOTIDE SEQUENCE [MRNA]</scope>
</reference>
<gene>
    <name type="primary">COX8A</name>
    <name type="synonym">COX8</name>
    <name type="synonym">COX8L</name>
</gene>
<sequence>MSVLTPLLLRGLTGSARRLPVLRAQVHSKPPREKLGTMDVAIGLTSCFVCFLLPSGWVLSHLETYKKRE</sequence>
<protein>
    <recommendedName>
        <fullName>Cytochrome c oxidase subunit 8A, mitochondrial</fullName>
    </recommendedName>
    <alternativeName>
        <fullName>Cytochrome c oxidase polypeptide VIII-liver</fullName>
    </alternativeName>
    <alternativeName>
        <fullName>Cytochrome c oxidase subunit 8-2</fullName>
    </alternativeName>
</protein>
<keyword id="KW-0472">Membrane</keyword>
<keyword id="KW-0496">Mitochondrion</keyword>
<keyword id="KW-0999">Mitochondrion inner membrane</keyword>
<keyword id="KW-0809">Transit peptide</keyword>
<keyword id="KW-0812">Transmembrane</keyword>
<keyword id="KW-1133">Transmembrane helix</keyword>
<keyword id="KW-0832">Ubl conjugation</keyword>
<accession>Q863G1</accession>
<dbReference type="EMBL" id="AY254825">
    <property type="protein sequence ID" value="AAP32256.1"/>
    <property type="molecule type" value="mRNA"/>
</dbReference>
<dbReference type="SMR" id="Q863G1"/>
<dbReference type="UniPathway" id="UPA00705"/>
<dbReference type="GO" id="GO:0005743">
    <property type="term" value="C:mitochondrial inner membrane"/>
    <property type="evidence" value="ECO:0007669"/>
    <property type="project" value="UniProtKB-SubCell"/>
</dbReference>
<dbReference type="GO" id="GO:0045277">
    <property type="term" value="C:respiratory chain complex IV"/>
    <property type="evidence" value="ECO:0007669"/>
    <property type="project" value="InterPro"/>
</dbReference>
<dbReference type="GO" id="GO:0006123">
    <property type="term" value="P:mitochondrial electron transport, cytochrome c to oxygen"/>
    <property type="evidence" value="ECO:0007669"/>
    <property type="project" value="InterPro"/>
</dbReference>
<dbReference type="CDD" id="cd00930">
    <property type="entry name" value="Cyt_c_Oxidase_VIII"/>
    <property type="match status" value="1"/>
</dbReference>
<dbReference type="FunFam" id="4.10.81.10:FF:000001">
    <property type="entry name" value="Cytochrome c oxidase subunit 8B, mitochondrial"/>
    <property type="match status" value="1"/>
</dbReference>
<dbReference type="Gene3D" id="4.10.81.10">
    <property type="entry name" value="Cytochrome c oxidase, subunit 8"/>
    <property type="match status" value="1"/>
</dbReference>
<dbReference type="InterPro" id="IPR003205">
    <property type="entry name" value="Cyt_c_oxidase_su8"/>
</dbReference>
<dbReference type="InterPro" id="IPR036548">
    <property type="entry name" value="Cyt_c_oxidase_su8_sf"/>
</dbReference>
<dbReference type="PANTHER" id="PTHR16717">
    <property type="entry name" value="CYTOCHROME C OXIDASE POLYPEPTIDE VIII"/>
    <property type="match status" value="1"/>
</dbReference>
<dbReference type="PANTHER" id="PTHR16717:SF1">
    <property type="entry name" value="CYTOCHROME C OXIDASE SUBUNIT 8A, MITOCHONDRIAL"/>
    <property type="match status" value="1"/>
</dbReference>
<dbReference type="Pfam" id="PF02285">
    <property type="entry name" value="COX8"/>
    <property type="match status" value="1"/>
</dbReference>
<dbReference type="SUPFAM" id="SSF81431">
    <property type="entry name" value="Mitochondrial cytochrome c oxidase subunit VIIIb (aka IX)"/>
    <property type="match status" value="1"/>
</dbReference>